<evidence type="ECO:0000255" key="1">
    <source>
        <dbReference type="PROSITE-ProRule" id="PRU00054"/>
    </source>
</evidence>
<evidence type="ECO:0000305" key="2"/>
<name>YPQQ_PSEPH</name>
<sequence>MSYEPATAATVAGLSVSGVKTMRVALYQCPPRPLDVAGNLQRLHQVAMEATDADLLVLPEMFLSGYNIGLEAVGALAEAQDGPSAQRIAAIAQAAGTAILYGYPERSVDGQIYNAVQLIDAQGQRLCNYRKTHLFGDLDHSMFSAGEDDFPLVELDGWKLGFLICYDIEFPENARRLALAGAELILVPTANMIPYDFVADVTIRARAFENQCYVAYANYCGHEEQIRYCGQSSIAAPDGSRIALAGLDEALIIGTLDRQLMGESRALNRYLSDRRPELYDDLSKR</sequence>
<dbReference type="EC" id="3.5.-.-"/>
<dbReference type="EMBL" id="X87299">
    <property type="protein sequence ID" value="CAA60729.1"/>
    <property type="molecule type" value="Genomic_DNA"/>
</dbReference>
<dbReference type="PIR" id="S58240">
    <property type="entry name" value="S58240"/>
</dbReference>
<dbReference type="SMR" id="P55176"/>
<dbReference type="PATRIC" id="fig|1124983.3.peg.5649"/>
<dbReference type="eggNOG" id="COG0388">
    <property type="taxonomic scope" value="Bacteria"/>
</dbReference>
<dbReference type="GO" id="GO:0050126">
    <property type="term" value="F:N-carbamoylputrescine amidase activity"/>
    <property type="evidence" value="ECO:0007669"/>
    <property type="project" value="TreeGrafter"/>
</dbReference>
<dbReference type="GO" id="GO:0033388">
    <property type="term" value="P:putrescine biosynthetic process from arginine"/>
    <property type="evidence" value="ECO:0007669"/>
    <property type="project" value="TreeGrafter"/>
</dbReference>
<dbReference type="CDD" id="cd07576">
    <property type="entry name" value="R-amidase_like"/>
    <property type="match status" value="1"/>
</dbReference>
<dbReference type="Gene3D" id="3.60.110.10">
    <property type="entry name" value="Carbon-nitrogen hydrolase"/>
    <property type="match status" value="1"/>
</dbReference>
<dbReference type="InterPro" id="IPR050345">
    <property type="entry name" value="Aliph_Amidase/BUP"/>
</dbReference>
<dbReference type="InterPro" id="IPR003010">
    <property type="entry name" value="C-N_Hydrolase"/>
</dbReference>
<dbReference type="InterPro" id="IPR036526">
    <property type="entry name" value="C-N_Hydrolase_sf"/>
</dbReference>
<dbReference type="InterPro" id="IPR044083">
    <property type="entry name" value="RamA-like"/>
</dbReference>
<dbReference type="InterPro" id="IPR001110">
    <property type="entry name" value="UPF0012_CS"/>
</dbReference>
<dbReference type="PANTHER" id="PTHR43674:SF2">
    <property type="entry name" value="BETA-UREIDOPROPIONASE"/>
    <property type="match status" value="1"/>
</dbReference>
<dbReference type="PANTHER" id="PTHR43674">
    <property type="entry name" value="NITRILASE C965.09-RELATED"/>
    <property type="match status" value="1"/>
</dbReference>
<dbReference type="Pfam" id="PF00795">
    <property type="entry name" value="CN_hydrolase"/>
    <property type="match status" value="1"/>
</dbReference>
<dbReference type="SUPFAM" id="SSF56317">
    <property type="entry name" value="Carbon-nitrogen hydrolase"/>
    <property type="match status" value="1"/>
</dbReference>
<dbReference type="PROSITE" id="PS50263">
    <property type="entry name" value="CN_HYDROLASE"/>
    <property type="match status" value="1"/>
</dbReference>
<dbReference type="PROSITE" id="PS01227">
    <property type="entry name" value="UPF0012"/>
    <property type="match status" value="1"/>
</dbReference>
<proteinExistence type="inferred from homology"/>
<comment type="similarity">
    <text evidence="2">Belongs to the carbon-nitrogen hydrolase superfamily. NIT1/NIT2 family.</text>
</comment>
<feature type="chain" id="PRO_0000213263" description="Hydrolase in pqqF 5'region">
    <location>
        <begin position="1"/>
        <end position="285"/>
    </location>
</feature>
<feature type="domain" description="CN hydrolase" evidence="1">
    <location>
        <begin position="22"/>
        <end position="258"/>
    </location>
</feature>
<feature type="active site" description="Proton acceptor" evidence="1">
    <location>
        <position position="60"/>
    </location>
</feature>
<feature type="active site" description="Proton donor" evidence="1">
    <location>
        <position position="131"/>
    </location>
</feature>
<feature type="active site" description="Nucleophile" evidence="1">
    <location>
        <position position="165"/>
    </location>
</feature>
<reference key="1">
    <citation type="journal article" date="1995" name="Appl. Environ. Microbiol.">
        <title>Tn5-directed cloning of pqq genes from Pseudomonas fluorescens CHA0: mutational inactivation of the genes results in overproduction of the antibiotic pyoluteorin.</title>
        <authorList>
            <person name="Schnider U."/>
            <person name="Keel C."/>
            <person name="Defago G."/>
            <person name="Haas D."/>
        </authorList>
    </citation>
    <scope>NUCLEOTIDE SEQUENCE [GENOMIC DNA]</scope>
    <source>
        <strain>DSM 19095 / LMG 27888 / CFBP 6595 / CHA0</strain>
    </source>
</reference>
<accession>P55176</accession>
<organism>
    <name type="scientific">Pseudomonas protegens (strain DSM 19095 / LMG 27888 / CFBP 6595 / CHA0)</name>
    <dbReference type="NCBI Taxonomy" id="1124983"/>
    <lineage>
        <taxon>Bacteria</taxon>
        <taxon>Pseudomonadati</taxon>
        <taxon>Pseudomonadota</taxon>
        <taxon>Gammaproteobacteria</taxon>
        <taxon>Pseudomonadales</taxon>
        <taxon>Pseudomonadaceae</taxon>
        <taxon>Pseudomonas</taxon>
    </lineage>
</organism>
<protein>
    <recommendedName>
        <fullName>Hydrolase in pqqF 5'region</fullName>
        <ecNumber>3.5.-.-</ecNumber>
    </recommendedName>
    <alternativeName>
        <fullName>ORF2</fullName>
    </alternativeName>
</protein>
<keyword id="KW-0378">Hydrolase</keyword>